<evidence type="ECO:0000255" key="1">
    <source>
        <dbReference type="HAMAP-Rule" id="MF_00333"/>
    </source>
</evidence>
<sequence>MKPDAHQVKQFLLNLQDTICQQLTAVDGAEFVEDSWQREAGGGGRSRVLRNGGVFEQAGVNFSHVHGEAMPASATAHRPELAGRSFEAMGVSLVVHPHNPYVPTSHANVRFFIAEKPGAEPVWWFGGGFDLTPFYGFEEDAIHWHRTARDLCLPFGEDVYPRYKKWCDEYFYLKHRNEQRGIGGLFFDDLNTPDFDHCFAFMQAVGKGYTDAYLPIVERRKAMEYGEHERNFQLYRRGRYVEFNLVWDRGTLFGLQTGGRTESILMSMPPLVRWEYDYQPEAGSPEAALSEFIKVRDWV</sequence>
<organism>
    <name type="scientific">Escherichia fergusonii (strain ATCC 35469 / DSM 13698 / CCUG 18766 / IAM 14443 / JCM 21226 / LMG 7866 / NBRC 102419 / NCTC 12128 / CDC 0568-73)</name>
    <dbReference type="NCBI Taxonomy" id="585054"/>
    <lineage>
        <taxon>Bacteria</taxon>
        <taxon>Pseudomonadati</taxon>
        <taxon>Pseudomonadota</taxon>
        <taxon>Gammaproteobacteria</taxon>
        <taxon>Enterobacterales</taxon>
        <taxon>Enterobacteriaceae</taxon>
        <taxon>Escherichia</taxon>
    </lineage>
</organism>
<reference key="1">
    <citation type="journal article" date="2009" name="PLoS Genet.">
        <title>Organised genome dynamics in the Escherichia coli species results in highly diverse adaptive paths.</title>
        <authorList>
            <person name="Touchon M."/>
            <person name="Hoede C."/>
            <person name="Tenaillon O."/>
            <person name="Barbe V."/>
            <person name="Baeriswyl S."/>
            <person name="Bidet P."/>
            <person name="Bingen E."/>
            <person name="Bonacorsi S."/>
            <person name="Bouchier C."/>
            <person name="Bouvet O."/>
            <person name="Calteau A."/>
            <person name="Chiapello H."/>
            <person name="Clermont O."/>
            <person name="Cruveiller S."/>
            <person name="Danchin A."/>
            <person name="Diard M."/>
            <person name="Dossat C."/>
            <person name="Karoui M.E."/>
            <person name="Frapy E."/>
            <person name="Garry L."/>
            <person name="Ghigo J.M."/>
            <person name="Gilles A.M."/>
            <person name="Johnson J."/>
            <person name="Le Bouguenec C."/>
            <person name="Lescat M."/>
            <person name="Mangenot S."/>
            <person name="Martinez-Jehanne V."/>
            <person name="Matic I."/>
            <person name="Nassif X."/>
            <person name="Oztas S."/>
            <person name="Petit M.A."/>
            <person name="Pichon C."/>
            <person name="Rouy Z."/>
            <person name="Ruf C.S."/>
            <person name="Schneider D."/>
            <person name="Tourret J."/>
            <person name="Vacherie B."/>
            <person name="Vallenet D."/>
            <person name="Medigue C."/>
            <person name="Rocha E.P.C."/>
            <person name="Denamur E."/>
        </authorList>
    </citation>
    <scope>NUCLEOTIDE SEQUENCE [LARGE SCALE GENOMIC DNA]</scope>
    <source>
        <strain>ATCC 35469 / DSM 13698 / BCRC 15582 / CCUG 18766 / IAM 14443 / JCM 21226 / LMG 7866 / NBRC 102419 / NCTC 12128 / CDC 0568-73</strain>
    </source>
</reference>
<accession>B7LKJ9</accession>
<keyword id="KW-0963">Cytoplasm</keyword>
<keyword id="KW-0350">Heme biosynthesis</keyword>
<keyword id="KW-0464">Manganese</keyword>
<keyword id="KW-0479">Metal-binding</keyword>
<keyword id="KW-0560">Oxidoreductase</keyword>
<keyword id="KW-0627">Porphyrin biosynthesis</keyword>
<name>HEM6_ESCF3</name>
<gene>
    <name evidence="1" type="primary">hemF</name>
    <name type="ordered locus">EFER_0736</name>
</gene>
<feature type="chain" id="PRO_1000119804" description="Oxygen-dependent coproporphyrinogen-III oxidase">
    <location>
        <begin position="1"/>
        <end position="299"/>
    </location>
</feature>
<feature type="region of interest" description="Important for dimerization" evidence="1">
    <location>
        <begin position="240"/>
        <end position="275"/>
    </location>
</feature>
<feature type="active site" description="Proton donor" evidence="1">
    <location>
        <position position="106"/>
    </location>
</feature>
<feature type="binding site" evidence="1">
    <location>
        <position position="92"/>
    </location>
    <ligand>
        <name>substrate</name>
    </ligand>
</feature>
<feature type="binding site" evidence="1">
    <location>
        <position position="96"/>
    </location>
    <ligand>
        <name>Mn(2+)</name>
        <dbReference type="ChEBI" id="CHEBI:29035"/>
    </ligand>
</feature>
<feature type="binding site" evidence="1">
    <location>
        <position position="106"/>
    </location>
    <ligand>
        <name>Mn(2+)</name>
        <dbReference type="ChEBI" id="CHEBI:29035"/>
    </ligand>
</feature>
<feature type="binding site" evidence="1">
    <location>
        <begin position="108"/>
        <end position="110"/>
    </location>
    <ligand>
        <name>substrate</name>
    </ligand>
</feature>
<feature type="binding site" evidence="1">
    <location>
        <position position="145"/>
    </location>
    <ligand>
        <name>Mn(2+)</name>
        <dbReference type="ChEBI" id="CHEBI:29035"/>
    </ligand>
</feature>
<feature type="binding site" evidence="1">
    <location>
        <position position="175"/>
    </location>
    <ligand>
        <name>Mn(2+)</name>
        <dbReference type="ChEBI" id="CHEBI:29035"/>
    </ligand>
</feature>
<feature type="binding site" evidence="1">
    <location>
        <begin position="258"/>
        <end position="260"/>
    </location>
    <ligand>
        <name>substrate</name>
    </ligand>
</feature>
<feature type="site" description="Important for dimerization" evidence="1">
    <location>
        <position position="175"/>
    </location>
</feature>
<proteinExistence type="inferred from homology"/>
<comment type="function">
    <text evidence="1">Involved in the heme biosynthesis. Catalyzes the aerobic oxidative decarboxylation of propionate groups of rings A and B of coproporphyrinogen-III to yield the vinyl groups in protoporphyrinogen-IX.</text>
</comment>
<comment type="catalytic activity">
    <reaction evidence="1">
        <text>coproporphyrinogen III + O2 + 2 H(+) = protoporphyrinogen IX + 2 CO2 + 2 H2O</text>
        <dbReference type="Rhea" id="RHEA:18257"/>
        <dbReference type="ChEBI" id="CHEBI:15377"/>
        <dbReference type="ChEBI" id="CHEBI:15378"/>
        <dbReference type="ChEBI" id="CHEBI:15379"/>
        <dbReference type="ChEBI" id="CHEBI:16526"/>
        <dbReference type="ChEBI" id="CHEBI:57307"/>
        <dbReference type="ChEBI" id="CHEBI:57309"/>
        <dbReference type="EC" id="1.3.3.3"/>
    </reaction>
</comment>
<comment type="cofactor">
    <cofactor evidence="1">
        <name>Mn(2+)</name>
        <dbReference type="ChEBI" id="CHEBI:29035"/>
    </cofactor>
</comment>
<comment type="pathway">
    <text evidence="1">Porphyrin-containing compound metabolism; protoporphyrin-IX biosynthesis; protoporphyrinogen-IX from coproporphyrinogen-III (O2 route): step 1/1.</text>
</comment>
<comment type="subunit">
    <text evidence="1">Homodimer.</text>
</comment>
<comment type="subcellular location">
    <subcellularLocation>
        <location evidence="1">Cytoplasm</location>
    </subcellularLocation>
</comment>
<comment type="similarity">
    <text evidence="1">Belongs to the aerobic coproporphyrinogen-III oxidase family.</text>
</comment>
<protein>
    <recommendedName>
        <fullName evidence="1">Oxygen-dependent coproporphyrinogen-III oxidase</fullName>
        <shortName evidence="1">CPO</shortName>
        <shortName evidence="1">Coprogen oxidase</shortName>
        <shortName evidence="1">Coproporphyrinogenase</shortName>
        <ecNumber evidence="1">1.3.3.3</ecNumber>
    </recommendedName>
</protein>
<dbReference type="EC" id="1.3.3.3" evidence="1"/>
<dbReference type="EMBL" id="CU928158">
    <property type="protein sequence ID" value="CAQ88277.1"/>
    <property type="molecule type" value="Genomic_DNA"/>
</dbReference>
<dbReference type="RefSeq" id="WP_000801373.1">
    <property type="nucleotide sequence ID" value="NC_011740.1"/>
</dbReference>
<dbReference type="SMR" id="B7LKJ9"/>
<dbReference type="GeneID" id="75058206"/>
<dbReference type="KEGG" id="efe:EFER_0736"/>
<dbReference type="HOGENOM" id="CLU_026169_0_1_6"/>
<dbReference type="OrthoDB" id="9777553at2"/>
<dbReference type="UniPathway" id="UPA00251">
    <property type="reaction ID" value="UER00322"/>
</dbReference>
<dbReference type="Proteomes" id="UP000000745">
    <property type="component" value="Chromosome"/>
</dbReference>
<dbReference type="GO" id="GO:0005737">
    <property type="term" value="C:cytoplasm"/>
    <property type="evidence" value="ECO:0007669"/>
    <property type="project" value="UniProtKB-SubCell"/>
</dbReference>
<dbReference type="GO" id="GO:0004109">
    <property type="term" value="F:coproporphyrinogen oxidase activity"/>
    <property type="evidence" value="ECO:0007669"/>
    <property type="project" value="UniProtKB-UniRule"/>
</dbReference>
<dbReference type="GO" id="GO:0030145">
    <property type="term" value="F:manganese ion binding"/>
    <property type="evidence" value="ECO:0007669"/>
    <property type="project" value="UniProtKB-UniRule"/>
</dbReference>
<dbReference type="GO" id="GO:0042803">
    <property type="term" value="F:protein homodimerization activity"/>
    <property type="evidence" value="ECO:0000250"/>
    <property type="project" value="UniProtKB"/>
</dbReference>
<dbReference type="GO" id="GO:0006782">
    <property type="term" value="P:protoporphyrinogen IX biosynthetic process"/>
    <property type="evidence" value="ECO:0007669"/>
    <property type="project" value="UniProtKB-UniRule"/>
</dbReference>
<dbReference type="FunFam" id="3.40.1500.10:FF:000001">
    <property type="entry name" value="Oxygen-dependent coproporphyrinogen-III oxidase"/>
    <property type="match status" value="1"/>
</dbReference>
<dbReference type="Gene3D" id="3.40.1500.10">
    <property type="entry name" value="Coproporphyrinogen III oxidase, aerobic"/>
    <property type="match status" value="1"/>
</dbReference>
<dbReference type="HAMAP" id="MF_00333">
    <property type="entry name" value="Coprogen_oxidas"/>
    <property type="match status" value="1"/>
</dbReference>
<dbReference type="InterPro" id="IPR001260">
    <property type="entry name" value="Coprogen_oxidase_aer"/>
</dbReference>
<dbReference type="InterPro" id="IPR036406">
    <property type="entry name" value="Coprogen_oxidase_aer_sf"/>
</dbReference>
<dbReference type="InterPro" id="IPR018375">
    <property type="entry name" value="Coprogen_oxidase_CS"/>
</dbReference>
<dbReference type="NCBIfam" id="NF003727">
    <property type="entry name" value="PRK05330.1"/>
    <property type="match status" value="1"/>
</dbReference>
<dbReference type="PANTHER" id="PTHR10755">
    <property type="entry name" value="COPROPORPHYRINOGEN III OXIDASE, MITOCHONDRIAL"/>
    <property type="match status" value="1"/>
</dbReference>
<dbReference type="PANTHER" id="PTHR10755:SF0">
    <property type="entry name" value="OXYGEN-DEPENDENT COPROPORPHYRINOGEN-III OXIDASE, MITOCHONDRIAL"/>
    <property type="match status" value="1"/>
</dbReference>
<dbReference type="Pfam" id="PF01218">
    <property type="entry name" value="Coprogen_oxidas"/>
    <property type="match status" value="1"/>
</dbReference>
<dbReference type="PIRSF" id="PIRSF000166">
    <property type="entry name" value="Coproporphyri_ox"/>
    <property type="match status" value="1"/>
</dbReference>
<dbReference type="PRINTS" id="PR00073">
    <property type="entry name" value="COPRGNOXDASE"/>
</dbReference>
<dbReference type="SUPFAM" id="SSF102886">
    <property type="entry name" value="Coproporphyrinogen III oxidase"/>
    <property type="match status" value="1"/>
</dbReference>
<dbReference type="PROSITE" id="PS01021">
    <property type="entry name" value="COPROGEN_OXIDASE"/>
    <property type="match status" value="1"/>
</dbReference>